<protein>
    <recommendedName>
        <fullName>UPF0758 protein CKL_0865</fullName>
    </recommendedName>
</protein>
<dbReference type="EMBL" id="CP000673">
    <property type="protein sequence ID" value="EDK32916.1"/>
    <property type="molecule type" value="Genomic_DNA"/>
</dbReference>
<dbReference type="SMR" id="A5N6I5"/>
<dbReference type="STRING" id="431943.CKL_0865"/>
<dbReference type="KEGG" id="ckl:CKL_0865"/>
<dbReference type="eggNOG" id="COG2003">
    <property type="taxonomic scope" value="Bacteria"/>
</dbReference>
<dbReference type="HOGENOM" id="CLU_073529_0_2_9"/>
<dbReference type="Proteomes" id="UP000002411">
    <property type="component" value="Chromosome"/>
</dbReference>
<dbReference type="GO" id="GO:0046872">
    <property type="term" value="F:metal ion binding"/>
    <property type="evidence" value="ECO:0007669"/>
    <property type="project" value="UniProtKB-KW"/>
</dbReference>
<dbReference type="GO" id="GO:0008237">
    <property type="term" value="F:metallopeptidase activity"/>
    <property type="evidence" value="ECO:0007669"/>
    <property type="project" value="UniProtKB-KW"/>
</dbReference>
<dbReference type="GO" id="GO:0006508">
    <property type="term" value="P:proteolysis"/>
    <property type="evidence" value="ECO:0007669"/>
    <property type="project" value="UniProtKB-KW"/>
</dbReference>
<dbReference type="CDD" id="cd08071">
    <property type="entry name" value="MPN_DUF2466"/>
    <property type="match status" value="1"/>
</dbReference>
<dbReference type="Gene3D" id="3.40.140.10">
    <property type="entry name" value="Cytidine Deaminase, domain 2"/>
    <property type="match status" value="1"/>
</dbReference>
<dbReference type="InterPro" id="IPR037518">
    <property type="entry name" value="MPN"/>
</dbReference>
<dbReference type="InterPro" id="IPR025657">
    <property type="entry name" value="RadC_JAB"/>
</dbReference>
<dbReference type="InterPro" id="IPR010994">
    <property type="entry name" value="RuvA_2-like"/>
</dbReference>
<dbReference type="InterPro" id="IPR001405">
    <property type="entry name" value="UPF0758"/>
</dbReference>
<dbReference type="InterPro" id="IPR020891">
    <property type="entry name" value="UPF0758_CS"/>
</dbReference>
<dbReference type="InterPro" id="IPR046778">
    <property type="entry name" value="UPF0758_N"/>
</dbReference>
<dbReference type="NCBIfam" id="NF000642">
    <property type="entry name" value="PRK00024.1"/>
    <property type="match status" value="1"/>
</dbReference>
<dbReference type="NCBIfam" id="TIGR00608">
    <property type="entry name" value="radc"/>
    <property type="match status" value="1"/>
</dbReference>
<dbReference type="PANTHER" id="PTHR30471">
    <property type="entry name" value="DNA REPAIR PROTEIN RADC"/>
    <property type="match status" value="1"/>
</dbReference>
<dbReference type="PANTHER" id="PTHR30471:SF3">
    <property type="entry name" value="UPF0758 PROTEIN YEES-RELATED"/>
    <property type="match status" value="1"/>
</dbReference>
<dbReference type="Pfam" id="PF04002">
    <property type="entry name" value="RadC"/>
    <property type="match status" value="1"/>
</dbReference>
<dbReference type="Pfam" id="PF20582">
    <property type="entry name" value="UPF0758_N"/>
    <property type="match status" value="1"/>
</dbReference>
<dbReference type="SUPFAM" id="SSF47781">
    <property type="entry name" value="RuvA domain 2-like"/>
    <property type="match status" value="1"/>
</dbReference>
<dbReference type="PROSITE" id="PS50249">
    <property type="entry name" value="MPN"/>
    <property type="match status" value="1"/>
</dbReference>
<dbReference type="PROSITE" id="PS01302">
    <property type="entry name" value="UPF0758"/>
    <property type="match status" value="1"/>
</dbReference>
<accession>A5N6I5</accession>
<comment type="similarity">
    <text evidence="2">Belongs to the UPF0758 family.</text>
</comment>
<feature type="chain" id="PRO_1000074142" description="UPF0758 protein CKL_0865">
    <location>
        <begin position="1"/>
        <end position="228"/>
    </location>
</feature>
<feature type="domain" description="MPN" evidence="1">
    <location>
        <begin position="106"/>
        <end position="228"/>
    </location>
</feature>
<feature type="short sequence motif" description="JAMM motif" evidence="1">
    <location>
        <begin position="177"/>
        <end position="190"/>
    </location>
</feature>
<feature type="binding site" evidence="1">
    <location>
        <position position="177"/>
    </location>
    <ligand>
        <name>Zn(2+)</name>
        <dbReference type="ChEBI" id="CHEBI:29105"/>
        <note>catalytic</note>
    </ligand>
</feature>
<feature type="binding site" evidence="1">
    <location>
        <position position="179"/>
    </location>
    <ligand>
        <name>Zn(2+)</name>
        <dbReference type="ChEBI" id="CHEBI:29105"/>
        <note>catalytic</note>
    </ligand>
</feature>
<feature type="binding site" evidence="1">
    <location>
        <position position="190"/>
    </location>
    <ligand>
        <name>Zn(2+)</name>
        <dbReference type="ChEBI" id="CHEBI:29105"/>
        <note>catalytic</note>
    </ligand>
</feature>
<gene>
    <name type="ordered locus">CKL_0865</name>
</gene>
<evidence type="ECO:0000255" key="1">
    <source>
        <dbReference type="PROSITE-ProRule" id="PRU01182"/>
    </source>
</evidence>
<evidence type="ECO:0000305" key="2"/>
<proteinExistence type="inferred from homology"/>
<name>Y865_CLOK5</name>
<organism>
    <name type="scientific">Clostridium kluyveri (strain ATCC 8527 / DSM 555 / NBRC 12016 / NCIMB 10680 / K1)</name>
    <dbReference type="NCBI Taxonomy" id="431943"/>
    <lineage>
        <taxon>Bacteria</taxon>
        <taxon>Bacillati</taxon>
        <taxon>Bacillota</taxon>
        <taxon>Clostridia</taxon>
        <taxon>Eubacteriales</taxon>
        <taxon>Clostridiaceae</taxon>
        <taxon>Clostridium</taxon>
    </lineage>
</organism>
<reference key="1">
    <citation type="journal article" date="2008" name="Proc. Natl. Acad. Sci. U.S.A.">
        <title>The genome of Clostridium kluyveri, a strict anaerobe with unique metabolic features.</title>
        <authorList>
            <person name="Seedorf H."/>
            <person name="Fricke W.F."/>
            <person name="Veith B."/>
            <person name="Brueggemann H."/>
            <person name="Liesegang H."/>
            <person name="Strittmatter A."/>
            <person name="Miethke M."/>
            <person name="Buckel W."/>
            <person name="Hinderberger J."/>
            <person name="Li F."/>
            <person name="Hagemeier C."/>
            <person name="Thauer R.K."/>
            <person name="Gottschalk G."/>
        </authorList>
    </citation>
    <scope>NUCLEOTIDE SEQUENCE [LARGE SCALE GENOMIC DNA]</scope>
    <source>
        <strain>ATCC 8527 / DSM 555 / NBRC 12016 / NCIMB 10680 / K1</strain>
    </source>
</reference>
<keyword id="KW-0378">Hydrolase</keyword>
<keyword id="KW-0479">Metal-binding</keyword>
<keyword id="KW-0482">Metalloprotease</keyword>
<keyword id="KW-0645">Protease</keyword>
<keyword id="KW-1185">Reference proteome</keyword>
<keyword id="KW-0862">Zinc</keyword>
<sequence>MKDNLKIMDLPKNERPRERLFRYGSEALSNSELLAVILGTGIKGENIVSLSNRIIKDNGGLNGIFNSDLEDFVSISGVGKAKAAKILAMAELSKRFKSYKDGDDYRICSPQDAAVLVMEEMRGMKQEHLKVILLNTKNMVIGIKNVFIGTLNSSIVHPREIFFYAIKKNSASIILCHNHPSGDPSPSNEDVNVTFRLKKCGELLGIQLVDHLIIGNGIFISLKEKGIL</sequence>